<reference key="1">
    <citation type="submission" date="2008-05" db="EMBL/GenBank/DDBJ databases">
        <title>Complete genome sequence of Clostridium botulinum E3 str. Alaska E43.</title>
        <authorList>
            <person name="Brinkac L.M."/>
            <person name="Brown J.L."/>
            <person name="Bruce D."/>
            <person name="Detter C."/>
            <person name="Munk C."/>
            <person name="Smith L.A."/>
            <person name="Smith T.J."/>
            <person name="Sutton G."/>
            <person name="Brettin T.S."/>
        </authorList>
    </citation>
    <scope>NUCLEOTIDE SEQUENCE [LARGE SCALE GENOMIC DNA]</scope>
    <source>
        <strain>Alaska E43 / Type E3</strain>
    </source>
</reference>
<protein>
    <recommendedName>
        <fullName evidence="1">tRNA (guanine-N(7)-)-methyltransferase</fullName>
        <ecNumber evidence="1">2.1.1.33</ecNumber>
    </recommendedName>
    <alternativeName>
        <fullName evidence="1">tRNA (guanine(46)-N(7))-methyltransferase</fullName>
    </alternativeName>
    <alternativeName>
        <fullName evidence="1">tRNA(m7G46)-methyltransferase</fullName>
    </alternativeName>
</protein>
<organism>
    <name type="scientific">Clostridium botulinum (strain Alaska E43 / Type E3)</name>
    <dbReference type="NCBI Taxonomy" id="508767"/>
    <lineage>
        <taxon>Bacteria</taxon>
        <taxon>Bacillati</taxon>
        <taxon>Bacillota</taxon>
        <taxon>Clostridia</taxon>
        <taxon>Eubacteriales</taxon>
        <taxon>Clostridiaceae</taxon>
        <taxon>Clostridium</taxon>
    </lineage>
</organism>
<accession>B2V2I8</accession>
<sequence>MRMRKKPWARPELESCNFFIVNPKENKGKWKESFNNENPIYLELGCGKGVFVAVHGSNNENINYIAIDIKDEVLGLAKRNIEKAYKEKNKELNNIKLMAQEIGLINEMLDENDKISRIYINFCNPWPKKKHKKRRLTHTRQLTQYRNFLKENGEIWFKTDDDELFEESLEYFKEGKFRIEYITYDLHTSGFEGNVQTEHERMFTEQGIKTKFLIAIKED</sequence>
<comment type="function">
    <text evidence="1">Catalyzes the formation of N(7)-methylguanine at position 46 (m7G46) in tRNA.</text>
</comment>
<comment type="catalytic activity">
    <reaction evidence="1">
        <text>guanosine(46) in tRNA + S-adenosyl-L-methionine = N(7)-methylguanosine(46) in tRNA + S-adenosyl-L-homocysteine</text>
        <dbReference type="Rhea" id="RHEA:42708"/>
        <dbReference type="Rhea" id="RHEA-COMP:10188"/>
        <dbReference type="Rhea" id="RHEA-COMP:10189"/>
        <dbReference type="ChEBI" id="CHEBI:57856"/>
        <dbReference type="ChEBI" id="CHEBI:59789"/>
        <dbReference type="ChEBI" id="CHEBI:74269"/>
        <dbReference type="ChEBI" id="CHEBI:74480"/>
        <dbReference type="EC" id="2.1.1.33"/>
    </reaction>
</comment>
<comment type="pathway">
    <text evidence="1">tRNA modification; N(7)-methylguanine-tRNA biosynthesis.</text>
</comment>
<comment type="similarity">
    <text evidence="1">Belongs to the class I-like SAM-binding methyltransferase superfamily. TrmB family.</text>
</comment>
<name>TRMB_CLOBA</name>
<keyword id="KW-0489">Methyltransferase</keyword>
<keyword id="KW-0949">S-adenosyl-L-methionine</keyword>
<keyword id="KW-0808">Transferase</keyword>
<keyword id="KW-0819">tRNA processing</keyword>
<gene>
    <name evidence="1" type="primary">trmB</name>
    <name type="ordered locus">CLH_0861</name>
</gene>
<evidence type="ECO:0000255" key="1">
    <source>
        <dbReference type="HAMAP-Rule" id="MF_01057"/>
    </source>
</evidence>
<feature type="chain" id="PRO_1000136344" description="tRNA (guanine-N(7)-)-methyltransferase">
    <location>
        <begin position="1"/>
        <end position="219"/>
    </location>
</feature>
<feature type="binding site" evidence="1">
    <location>
        <position position="43"/>
    </location>
    <ligand>
        <name>S-adenosyl-L-methionine</name>
        <dbReference type="ChEBI" id="CHEBI:59789"/>
    </ligand>
</feature>
<feature type="binding site" evidence="1">
    <location>
        <position position="68"/>
    </location>
    <ligand>
        <name>S-adenosyl-L-methionine</name>
        <dbReference type="ChEBI" id="CHEBI:59789"/>
    </ligand>
</feature>
<feature type="binding site" evidence="1">
    <location>
        <position position="101"/>
    </location>
    <ligand>
        <name>S-adenosyl-L-methionine</name>
        <dbReference type="ChEBI" id="CHEBI:59789"/>
    </ligand>
</feature>
<feature type="binding site" evidence="1">
    <location>
        <position position="124"/>
    </location>
    <ligand>
        <name>S-adenosyl-L-methionine</name>
        <dbReference type="ChEBI" id="CHEBI:59789"/>
    </ligand>
</feature>
<feature type="binding site" evidence="1">
    <location>
        <position position="128"/>
    </location>
    <ligand>
        <name>substrate</name>
    </ligand>
</feature>
<feature type="binding site" evidence="1">
    <location>
        <position position="160"/>
    </location>
    <ligand>
        <name>substrate</name>
    </ligand>
</feature>
<dbReference type="EC" id="2.1.1.33" evidence="1"/>
<dbReference type="EMBL" id="CP001078">
    <property type="protein sequence ID" value="ACD53927.1"/>
    <property type="molecule type" value="Genomic_DNA"/>
</dbReference>
<dbReference type="RefSeq" id="WP_012451733.1">
    <property type="nucleotide sequence ID" value="NC_010723.1"/>
</dbReference>
<dbReference type="SMR" id="B2V2I8"/>
<dbReference type="KEGG" id="cbt:CLH_0861"/>
<dbReference type="HOGENOM" id="CLU_050910_2_1_9"/>
<dbReference type="UniPathway" id="UPA00989"/>
<dbReference type="GO" id="GO:0043527">
    <property type="term" value="C:tRNA methyltransferase complex"/>
    <property type="evidence" value="ECO:0007669"/>
    <property type="project" value="TreeGrafter"/>
</dbReference>
<dbReference type="GO" id="GO:0008176">
    <property type="term" value="F:tRNA (guanine(46)-N7)-methyltransferase activity"/>
    <property type="evidence" value="ECO:0007669"/>
    <property type="project" value="UniProtKB-UniRule"/>
</dbReference>
<dbReference type="Gene3D" id="3.40.50.150">
    <property type="entry name" value="Vaccinia Virus protein VP39"/>
    <property type="match status" value="1"/>
</dbReference>
<dbReference type="HAMAP" id="MF_01057">
    <property type="entry name" value="tRNA_methyltr_TrmB"/>
    <property type="match status" value="1"/>
</dbReference>
<dbReference type="InterPro" id="IPR029063">
    <property type="entry name" value="SAM-dependent_MTases_sf"/>
</dbReference>
<dbReference type="InterPro" id="IPR003358">
    <property type="entry name" value="tRNA_(Gua-N-7)_MeTrfase_Trmb"/>
</dbReference>
<dbReference type="InterPro" id="IPR055361">
    <property type="entry name" value="tRNA_methyltr_TrmB_bact"/>
</dbReference>
<dbReference type="NCBIfam" id="NF001080">
    <property type="entry name" value="PRK00121.2-2"/>
    <property type="match status" value="1"/>
</dbReference>
<dbReference type="NCBIfam" id="TIGR00091">
    <property type="entry name" value="tRNA (guanosine(46)-N7)-methyltransferase TrmB"/>
    <property type="match status" value="1"/>
</dbReference>
<dbReference type="PANTHER" id="PTHR23417">
    <property type="entry name" value="3-DEOXY-D-MANNO-OCTULOSONIC-ACID TRANSFERASE/TRNA GUANINE-N 7 - -METHYLTRANSFERASE"/>
    <property type="match status" value="1"/>
</dbReference>
<dbReference type="PANTHER" id="PTHR23417:SF14">
    <property type="entry name" value="PENTACOTRIPEPTIDE-REPEAT REGION OF PRORP DOMAIN-CONTAINING PROTEIN"/>
    <property type="match status" value="1"/>
</dbReference>
<dbReference type="Pfam" id="PF02390">
    <property type="entry name" value="Methyltransf_4"/>
    <property type="match status" value="1"/>
</dbReference>
<dbReference type="SUPFAM" id="SSF53335">
    <property type="entry name" value="S-adenosyl-L-methionine-dependent methyltransferases"/>
    <property type="match status" value="1"/>
</dbReference>
<dbReference type="PROSITE" id="PS51625">
    <property type="entry name" value="SAM_MT_TRMB"/>
    <property type="match status" value="1"/>
</dbReference>
<proteinExistence type="inferred from homology"/>